<protein>
    <recommendedName>
        <fullName evidence="1">Phosphoribosylformylglycinamidine cyclo-ligase</fullName>
        <ecNumber evidence="1">6.3.3.1</ecNumber>
    </recommendedName>
    <alternativeName>
        <fullName evidence="1">AIR synthase</fullName>
    </alternativeName>
    <alternativeName>
        <fullName evidence="1">AIRS</fullName>
    </alternativeName>
    <alternativeName>
        <fullName evidence="1">Phosphoribosyl-aminoimidazole synthetase</fullName>
    </alternativeName>
</protein>
<accession>Q39JB9</accession>
<evidence type="ECO:0000255" key="1">
    <source>
        <dbReference type="HAMAP-Rule" id="MF_00741"/>
    </source>
</evidence>
<comment type="catalytic activity">
    <reaction evidence="1">
        <text>2-formamido-N(1)-(5-O-phospho-beta-D-ribosyl)acetamidine + ATP = 5-amino-1-(5-phospho-beta-D-ribosyl)imidazole + ADP + phosphate + H(+)</text>
        <dbReference type="Rhea" id="RHEA:23032"/>
        <dbReference type="ChEBI" id="CHEBI:15378"/>
        <dbReference type="ChEBI" id="CHEBI:30616"/>
        <dbReference type="ChEBI" id="CHEBI:43474"/>
        <dbReference type="ChEBI" id="CHEBI:137981"/>
        <dbReference type="ChEBI" id="CHEBI:147287"/>
        <dbReference type="ChEBI" id="CHEBI:456216"/>
        <dbReference type="EC" id="6.3.3.1"/>
    </reaction>
</comment>
<comment type="pathway">
    <text evidence="1">Purine metabolism; IMP biosynthesis via de novo pathway; 5-amino-1-(5-phospho-D-ribosyl)imidazole from N(2)-formyl-N(1)-(5-phospho-D-ribosyl)glycinamide: step 2/2.</text>
</comment>
<comment type="subcellular location">
    <subcellularLocation>
        <location evidence="1">Cytoplasm</location>
    </subcellularLocation>
</comment>
<comment type="similarity">
    <text evidence="1">Belongs to the AIR synthase family.</text>
</comment>
<reference key="1">
    <citation type="submission" date="2005-10" db="EMBL/GenBank/DDBJ databases">
        <title>Complete sequence of chromosome 1 of Burkholderia sp. 383.</title>
        <authorList>
            <consortium name="US DOE Joint Genome Institute"/>
            <person name="Copeland A."/>
            <person name="Lucas S."/>
            <person name="Lapidus A."/>
            <person name="Barry K."/>
            <person name="Detter J.C."/>
            <person name="Glavina T."/>
            <person name="Hammon N."/>
            <person name="Israni S."/>
            <person name="Pitluck S."/>
            <person name="Chain P."/>
            <person name="Malfatti S."/>
            <person name="Shin M."/>
            <person name="Vergez L."/>
            <person name="Schmutz J."/>
            <person name="Larimer F."/>
            <person name="Land M."/>
            <person name="Kyrpides N."/>
            <person name="Lykidis A."/>
            <person name="Richardson P."/>
        </authorList>
    </citation>
    <scope>NUCLEOTIDE SEQUENCE [LARGE SCALE GENOMIC DNA]</scope>
    <source>
        <strain>ATCC 17760 / DSM 23089 / LMG 22485 / NCIMB 9086 / R18194 / 383</strain>
    </source>
</reference>
<feature type="chain" id="PRO_0000258342" description="Phosphoribosylformylglycinamidine cyclo-ligase">
    <location>
        <begin position="1"/>
        <end position="351"/>
    </location>
</feature>
<organism>
    <name type="scientific">Burkholderia lata (strain ATCC 17760 / DSM 23089 / LMG 22485 / NCIMB 9086 / R18194 / 383)</name>
    <dbReference type="NCBI Taxonomy" id="482957"/>
    <lineage>
        <taxon>Bacteria</taxon>
        <taxon>Pseudomonadati</taxon>
        <taxon>Pseudomonadota</taxon>
        <taxon>Betaproteobacteria</taxon>
        <taxon>Burkholderiales</taxon>
        <taxon>Burkholderiaceae</taxon>
        <taxon>Burkholderia</taxon>
        <taxon>Burkholderia cepacia complex</taxon>
    </lineage>
</organism>
<gene>
    <name evidence="1" type="primary">purM</name>
    <name type="ordered locus">Bcep18194_A3848</name>
</gene>
<name>PUR5_BURL3</name>
<sequence>MNPPKSAPDAQGLSYRDAGVDIDAGDALIDKIKPFAKKTLRDGVLGGIGGFGALFEVPKKYKEPVLVSGTDGVGTKLKLAFHLNKHDTVGQDLVAMSVNDILVQGAEPLFFLDYFACGKLDVDTAATVVKGIAQGCELSGCALIGGETAEMPGMYPDGEYDLAGFAVGAVEKSKIIDGSTIAEGDVVLGLASSGIHSNGFSLVRKIIERANPDLSADFHGRSLADALMAPTRIYVKPLLALMQKLTVKGMAHITGGGLVENIPRVLREGLTAELDQDAWPLPPLFKWLQEHGGVADAEMHRVFNCGIGMAVIVSAADADAAIADLTAAGEQVWKIGTVRATREGEAQTVVV</sequence>
<keyword id="KW-0067">ATP-binding</keyword>
<keyword id="KW-0963">Cytoplasm</keyword>
<keyword id="KW-0436">Ligase</keyword>
<keyword id="KW-0547">Nucleotide-binding</keyword>
<keyword id="KW-0658">Purine biosynthesis</keyword>
<dbReference type="EC" id="6.3.3.1" evidence="1"/>
<dbReference type="EMBL" id="CP000151">
    <property type="protein sequence ID" value="ABB07447.1"/>
    <property type="molecule type" value="Genomic_DNA"/>
</dbReference>
<dbReference type="RefSeq" id="WP_011351032.1">
    <property type="nucleotide sequence ID" value="NC_007510.1"/>
</dbReference>
<dbReference type="SMR" id="Q39JB9"/>
<dbReference type="GeneID" id="45093759"/>
<dbReference type="KEGG" id="bur:Bcep18194_A3848"/>
<dbReference type="PATRIC" id="fig|482957.22.peg.716"/>
<dbReference type="HOGENOM" id="CLU_047116_0_0_4"/>
<dbReference type="UniPathway" id="UPA00074">
    <property type="reaction ID" value="UER00129"/>
</dbReference>
<dbReference type="Proteomes" id="UP000002705">
    <property type="component" value="Chromosome 1"/>
</dbReference>
<dbReference type="GO" id="GO:0005829">
    <property type="term" value="C:cytosol"/>
    <property type="evidence" value="ECO:0007669"/>
    <property type="project" value="TreeGrafter"/>
</dbReference>
<dbReference type="GO" id="GO:0005524">
    <property type="term" value="F:ATP binding"/>
    <property type="evidence" value="ECO:0007669"/>
    <property type="project" value="UniProtKB-KW"/>
</dbReference>
<dbReference type="GO" id="GO:0004637">
    <property type="term" value="F:phosphoribosylamine-glycine ligase activity"/>
    <property type="evidence" value="ECO:0007669"/>
    <property type="project" value="TreeGrafter"/>
</dbReference>
<dbReference type="GO" id="GO:0004641">
    <property type="term" value="F:phosphoribosylformylglycinamidine cyclo-ligase activity"/>
    <property type="evidence" value="ECO:0007669"/>
    <property type="project" value="UniProtKB-UniRule"/>
</dbReference>
<dbReference type="GO" id="GO:0006189">
    <property type="term" value="P:'de novo' IMP biosynthetic process"/>
    <property type="evidence" value="ECO:0007669"/>
    <property type="project" value="UniProtKB-UniRule"/>
</dbReference>
<dbReference type="GO" id="GO:0046084">
    <property type="term" value="P:adenine biosynthetic process"/>
    <property type="evidence" value="ECO:0007669"/>
    <property type="project" value="TreeGrafter"/>
</dbReference>
<dbReference type="CDD" id="cd02196">
    <property type="entry name" value="PurM"/>
    <property type="match status" value="1"/>
</dbReference>
<dbReference type="FunFam" id="3.30.1330.10:FF:000001">
    <property type="entry name" value="Phosphoribosylformylglycinamidine cyclo-ligase"/>
    <property type="match status" value="1"/>
</dbReference>
<dbReference type="FunFam" id="3.90.650.10:FF:000001">
    <property type="entry name" value="Phosphoribosylformylglycinamidine cyclo-ligase"/>
    <property type="match status" value="1"/>
</dbReference>
<dbReference type="Gene3D" id="3.90.650.10">
    <property type="entry name" value="PurM-like C-terminal domain"/>
    <property type="match status" value="1"/>
</dbReference>
<dbReference type="Gene3D" id="3.30.1330.10">
    <property type="entry name" value="PurM-like, N-terminal domain"/>
    <property type="match status" value="1"/>
</dbReference>
<dbReference type="HAMAP" id="MF_00741">
    <property type="entry name" value="AIRS"/>
    <property type="match status" value="1"/>
</dbReference>
<dbReference type="InterPro" id="IPR010918">
    <property type="entry name" value="PurM-like_C_dom"/>
</dbReference>
<dbReference type="InterPro" id="IPR036676">
    <property type="entry name" value="PurM-like_C_sf"/>
</dbReference>
<dbReference type="InterPro" id="IPR016188">
    <property type="entry name" value="PurM-like_N"/>
</dbReference>
<dbReference type="InterPro" id="IPR036921">
    <property type="entry name" value="PurM-like_N_sf"/>
</dbReference>
<dbReference type="InterPro" id="IPR004733">
    <property type="entry name" value="PurM_cligase"/>
</dbReference>
<dbReference type="NCBIfam" id="TIGR00878">
    <property type="entry name" value="purM"/>
    <property type="match status" value="1"/>
</dbReference>
<dbReference type="PANTHER" id="PTHR10520:SF12">
    <property type="entry name" value="TRIFUNCTIONAL PURINE BIOSYNTHETIC PROTEIN ADENOSINE-3"/>
    <property type="match status" value="1"/>
</dbReference>
<dbReference type="PANTHER" id="PTHR10520">
    <property type="entry name" value="TRIFUNCTIONAL PURINE BIOSYNTHETIC PROTEIN ADENOSINE-3-RELATED"/>
    <property type="match status" value="1"/>
</dbReference>
<dbReference type="Pfam" id="PF00586">
    <property type="entry name" value="AIRS"/>
    <property type="match status" value="1"/>
</dbReference>
<dbReference type="Pfam" id="PF02769">
    <property type="entry name" value="AIRS_C"/>
    <property type="match status" value="1"/>
</dbReference>
<dbReference type="SUPFAM" id="SSF56042">
    <property type="entry name" value="PurM C-terminal domain-like"/>
    <property type="match status" value="1"/>
</dbReference>
<dbReference type="SUPFAM" id="SSF55326">
    <property type="entry name" value="PurM N-terminal domain-like"/>
    <property type="match status" value="1"/>
</dbReference>
<proteinExistence type="inferred from homology"/>